<proteinExistence type="evidence at protein level"/>
<reference key="1">
    <citation type="journal article" date="1972" name="J. Biol. Chem.">
        <title>Proteins of the thermophilic fungus Humicola lanuginosa. I. Isolation and amino acid sequence of a cytochrome C.</title>
        <authorList>
            <person name="Morgan W.T."/>
            <person name="Hensley C.P. Jr."/>
            <person name="Riehm J.P."/>
        </authorList>
    </citation>
    <scope>PROTEIN SEQUENCE</scope>
    <scope>METHYLATION AT LYS-80 AND LYS-94</scope>
    <source>
        <strain>ATCC 16455 / CBS 632.91</strain>
    </source>
</reference>
<reference key="2">
    <citation type="journal article" date="1974" name="Biochem. Biophys. Res. Commun.">
        <title>Neurospora crassa and Humicola lanuginosa cytochromes c: more homology in the heme region.</title>
        <authorList>
            <person name="Lederer F."/>
            <person name="Simon A.M."/>
        </authorList>
    </citation>
    <scope>PROTEIN SEQUENCE OF 1-37</scope>
</reference>
<name>CYC_THELA</name>
<comment type="function">
    <text>Electron carrier protein. The oxidized form of the cytochrome c heme group can accept an electron from the heme group of the cytochrome c1 subunit of cytochrome reductase. Cytochrome c then transfers this electron to the cytochrome oxidase complex, the final protein carrier in the mitochondrial electron-transport chain.</text>
</comment>
<comment type="subcellular location">
    <subcellularLocation>
        <location>Mitochondrion intermembrane space</location>
    </subcellularLocation>
    <text>Loosely associated with the inner membrane.</text>
</comment>
<comment type="PTM">
    <text>Binds 1 heme c group covalently per subunit.</text>
</comment>
<comment type="PTM">
    <text>Lys-94 was found to be 95% trimethylated.</text>
</comment>
<comment type="similarity">
    <text evidence="3">Belongs to the cytochrome c family.</text>
</comment>
<comment type="online information" name="Protein Spotlight">
    <link uri="https://www.proteinspotlight.org/back_issues/076"/>
    <text>Life shuttle - Issue 76 of November 2006</text>
</comment>
<evidence type="ECO:0000255" key="1">
    <source>
        <dbReference type="PROSITE-ProRule" id="PRU00433"/>
    </source>
</evidence>
<evidence type="ECO:0000269" key="2">
    <source>
    </source>
</evidence>
<evidence type="ECO:0000305" key="3"/>
<sequence>AKGGSFEPGDASKGANLFKTRCAQCHSVEQGGANKIGPNLHGLFGRKTGSVEGYSYTDANKQAGITWNEDTLFEYLENPKKFIPGTKMAFGGLKKNKDRNDLITYLKEATK</sequence>
<keyword id="KW-0903">Direct protein sequencing</keyword>
<keyword id="KW-0249">Electron transport</keyword>
<keyword id="KW-0349">Heme</keyword>
<keyword id="KW-0408">Iron</keyword>
<keyword id="KW-0479">Metal-binding</keyword>
<keyword id="KW-0488">Methylation</keyword>
<keyword id="KW-0496">Mitochondrion</keyword>
<keyword id="KW-0679">Respiratory chain</keyword>
<keyword id="KW-0813">Transport</keyword>
<feature type="chain" id="PRO_0000108334" description="Cytochrome c">
    <location>
        <begin position="1"/>
        <end position="111"/>
    </location>
</feature>
<feature type="binding site" description="covalent" evidence="1 2">
    <location>
        <position position="22"/>
    </location>
    <ligand>
        <name>heme c</name>
        <dbReference type="ChEBI" id="CHEBI:61717"/>
    </ligand>
</feature>
<feature type="binding site" description="covalent" evidence="1 2">
    <location>
        <position position="25"/>
    </location>
    <ligand>
        <name>heme c</name>
        <dbReference type="ChEBI" id="CHEBI:61717"/>
    </ligand>
</feature>
<feature type="binding site" description="axial binding residue">
    <location>
        <position position="26"/>
    </location>
    <ligand>
        <name>heme c</name>
        <dbReference type="ChEBI" id="CHEBI:61717"/>
    </ligand>
    <ligandPart>
        <name>Fe</name>
        <dbReference type="ChEBI" id="CHEBI:18248"/>
    </ligandPart>
</feature>
<feature type="binding site" description="axial binding residue">
    <location>
        <position position="88"/>
    </location>
    <ligand>
        <name>heme c</name>
        <dbReference type="ChEBI" id="CHEBI:61717"/>
    </ligand>
    <ligandPart>
        <name>Fe</name>
        <dbReference type="ChEBI" id="CHEBI:18248"/>
    </ligandPart>
</feature>
<feature type="modified residue" description="N6,N6-dimethyllysine" evidence="2">
    <location>
        <position position="80"/>
    </location>
</feature>
<feature type="modified residue" description="N6,N6,N6-trimethyllysine; partial" evidence="2">
    <location>
        <position position="94"/>
    </location>
</feature>
<feature type="sequence conflict" description="In Ref. 1; AA sequence." evidence="3" ref="1">
    <original>AS</original>
    <variation>SA</variation>
    <location>
        <begin position="11"/>
        <end position="12"/>
    </location>
</feature>
<feature type="sequence conflict" description="In Ref. 1; AA sequence." evidence="3" ref="1">
    <original>Q</original>
    <variation>E</variation>
    <location>
        <position position="24"/>
    </location>
</feature>
<feature type="sequence conflict" description="In Ref. 1; AA sequence." evidence="3" ref="1">
    <original>SVEQGGAN</original>
    <variation>GEGANVSQ</variation>
    <location>
        <begin position="27"/>
        <end position="34"/>
    </location>
</feature>
<protein>
    <recommendedName>
        <fullName>Cytochrome c</fullName>
    </recommendedName>
</protein>
<accession>P00047</accession>
<dbReference type="PIR" id="A92114">
    <property type="entry name" value="CCHL"/>
</dbReference>
<dbReference type="SMR" id="P00047"/>
<dbReference type="iPTMnet" id="P00047"/>
<dbReference type="GO" id="GO:0005758">
    <property type="term" value="C:mitochondrial intermembrane space"/>
    <property type="evidence" value="ECO:0007669"/>
    <property type="project" value="UniProtKB-SubCell"/>
</dbReference>
<dbReference type="GO" id="GO:0009055">
    <property type="term" value="F:electron transfer activity"/>
    <property type="evidence" value="ECO:0007669"/>
    <property type="project" value="InterPro"/>
</dbReference>
<dbReference type="GO" id="GO:0020037">
    <property type="term" value="F:heme binding"/>
    <property type="evidence" value="ECO:0007669"/>
    <property type="project" value="InterPro"/>
</dbReference>
<dbReference type="GO" id="GO:0046872">
    <property type="term" value="F:metal ion binding"/>
    <property type="evidence" value="ECO:0007669"/>
    <property type="project" value="UniProtKB-KW"/>
</dbReference>
<dbReference type="FunFam" id="1.10.760.10:FF:000001">
    <property type="entry name" value="Cytochrome c iso-1"/>
    <property type="match status" value="1"/>
</dbReference>
<dbReference type="Gene3D" id="1.10.760.10">
    <property type="entry name" value="Cytochrome c-like domain"/>
    <property type="match status" value="1"/>
</dbReference>
<dbReference type="InterPro" id="IPR009056">
    <property type="entry name" value="Cyt_c-like_dom"/>
</dbReference>
<dbReference type="InterPro" id="IPR036909">
    <property type="entry name" value="Cyt_c-like_dom_sf"/>
</dbReference>
<dbReference type="InterPro" id="IPR002327">
    <property type="entry name" value="Cyt_c_1A/1B"/>
</dbReference>
<dbReference type="PANTHER" id="PTHR11961">
    <property type="entry name" value="CYTOCHROME C"/>
    <property type="match status" value="1"/>
</dbReference>
<dbReference type="Pfam" id="PF00034">
    <property type="entry name" value="Cytochrom_C"/>
    <property type="match status" value="1"/>
</dbReference>
<dbReference type="PRINTS" id="PR00604">
    <property type="entry name" value="CYTCHRMECIAB"/>
</dbReference>
<dbReference type="SUPFAM" id="SSF46626">
    <property type="entry name" value="Cytochrome c"/>
    <property type="match status" value="1"/>
</dbReference>
<dbReference type="PROSITE" id="PS51007">
    <property type="entry name" value="CYTC"/>
    <property type="match status" value="1"/>
</dbReference>
<organism>
    <name type="scientific">Thermomyces lanuginosus</name>
    <name type="common">Humicola lanuginosa</name>
    <dbReference type="NCBI Taxonomy" id="5541"/>
    <lineage>
        <taxon>Eukaryota</taxon>
        <taxon>Fungi</taxon>
        <taxon>Dikarya</taxon>
        <taxon>Ascomycota</taxon>
        <taxon>Pezizomycotina</taxon>
        <taxon>Eurotiomycetes</taxon>
        <taxon>Eurotiomycetidae</taxon>
        <taxon>Eurotiales</taxon>
        <taxon>Trichocomaceae</taxon>
        <taxon>Thermomyces</taxon>
    </lineage>
</organism>